<accession>A0Q5S7</accession>
<feature type="chain" id="PRO_0000429647" description="L-Ala-D/L-Glu epimerase">
    <location>
        <begin position="1"/>
        <end position="356"/>
    </location>
</feature>
<feature type="binding site" evidence="1">
    <location>
        <begin position="161"/>
        <end position="163"/>
    </location>
    <ligand>
        <name>substrate</name>
    </ligand>
</feature>
<feature type="binding site" evidence="1">
    <location>
        <position position="191"/>
    </location>
    <ligand>
        <name>Mg(2+)</name>
        <dbReference type="ChEBI" id="CHEBI:18420"/>
    </ligand>
</feature>
<feature type="binding site" evidence="1">
    <location>
        <position position="219"/>
    </location>
    <ligand>
        <name>Mg(2+)</name>
        <dbReference type="ChEBI" id="CHEBI:18420"/>
    </ligand>
</feature>
<feature type="binding site" evidence="1">
    <location>
        <position position="244"/>
    </location>
    <ligand>
        <name>Mg(2+)</name>
        <dbReference type="ChEBI" id="CHEBI:18420"/>
    </ligand>
</feature>
<feature type="binding site" evidence="1">
    <location>
        <position position="268"/>
    </location>
    <ligand>
        <name>substrate</name>
    </ligand>
</feature>
<feature type="binding site" evidence="1">
    <location>
        <begin position="320"/>
        <end position="322"/>
    </location>
    <ligand>
        <name>substrate</name>
    </ligand>
</feature>
<dbReference type="EC" id="5.1.1.20"/>
<dbReference type="EMBL" id="CP000439">
    <property type="protein sequence ID" value="ABK89592.1"/>
    <property type="molecule type" value="Genomic_DNA"/>
</dbReference>
<dbReference type="RefSeq" id="WP_003038832.1">
    <property type="nucleotide sequence ID" value="NC_008601.1"/>
</dbReference>
<dbReference type="SMR" id="A0Q5S7"/>
<dbReference type="KEGG" id="ftn:FTN_0700"/>
<dbReference type="KEGG" id="ftx:AW25_1324"/>
<dbReference type="BioCyc" id="FTUL401614:G1G75-728-MONOMER"/>
<dbReference type="Proteomes" id="UP000000762">
    <property type="component" value="Chromosome"/>
</dbReference>
<dbReference type="GO" id="GO:0103031">
    <property type="term" value="F:L-Ala-D/L-Glu epimerase activity"/>
    <property type="evidence" value="ECO:0007669"/>
    <property type="project" value="UniProtKB-EC"/>
</dbReference>
<dbReference type="GO" id="GO:0000287">
    <property type="term" value="F:magnesium ion binding"/>
    <property type="evidence" value="ECO:0000314"/>
    <property type="project" value="UniProtKB"/>
</dbReference>
<dbReference type="GO" id="GO:0016854">
    <property type="term" value="F:racemase and epimerase activity"/>
    <property type="evidence" value="ECO:0000314"/>
    <property type="project" value="UniProtKB"/>
</dbReference>
<dbReference type="GO" id="GO:0071555">
    <property type="term" value="P:cell wall organization"/>
    <property type="evidence" value="ECO:0007669"/>
    <property type="project" value="UniProtKB-KW"/>
</dbReference>
<dbReference type="GO" id="GO:0006518">
    <property type="term" value="P:peptide metabolic process"/>
    <property type="evidence" value="ECO:0000314"/>
    <property type="project" value="UniProtKB"/>
</dbReference>
<dbReference type="CDD" id="cd03319">
    <property type="entry name" value="L-Ala-DL-Glu_epimerase"/>
    <property type="match status" value="1"/>
</dbReference>
<dbReference type="FunFam" id="3.30.390.10:FF:000009">
    <property type="entry name" value="Hydrophobic dipeptide epimerase"/>
    <property type="match status" value="1"/>
</dbReference>
<dbReference type="Gene3D" id="3.20.20.120">
    <property type="entry name" value="Enolase-like C-terminal domain"/>
    <property type="match status" value="1"/>
</dbReference>
<dbReference type="Gene3D" id="3.30.390.10">
    <property type="entry name" value="Enolase-like, N-terminal domain"/>
    <property type="match status" value="1"/>
</dbReference>
<dbReference type="InterPro" id="IPR034603">
    <property type="entry name" value="Dipeptide_epimerase"/>
</dbReference>
<dbReference type="InterPro" id="IPR036849">
    <property type="entry name" value="Enolase-like_C_sf"/>
</dbReference>
<dbReference type="InterPro" id="IPR029017">
    <property type="entry name" value="Enolase-like_N"/>
</dbReference>
<dbReference type="InterPro" id="IPR029065">
    <property type="entry name" value="Enolase_C-like"/>
</dbReference>
<dbReference type="InterPro" id="IPR013342">
    <property type="entry name" value="Mandelate_racemase_C"/>
</dbReference>
<dbReference type="InterPro" id="IPR013341">
    <property type="entry name" value="Mandelate_racemase_N_dom"/>
</dbReference>
<dbReference type="PANTHER" id="PTHR48073:SF2">
    <property type="entry name" value="O-SUCCINYLBENZOATE SYNTHASE"/>
    <property type="match status" value="1"/>
</dbReference>
<dbReference type="PANTHER" id="PTHR48073">
    <property type="entry name" value="O-SUCCINYLBENZOATE SYNTHASE-RELATED"/>
    <property type="match status" value="1"/>
</dbReference>
<dbReference type="Pfam" id="PF13378">
    <property type="entry name" value="MR_MLE_C"/>
    <property type="match status" value="1"/>
</dbReference>
<dbReference type="Pfam" id="PF02746">
    <property type="entry name" value="MR_MLE_N"/>
    <property type="match status" value="1"/>
</dbReference>
<dbReference type="SFLD" id="SFLDG00180">
    <property type="entry name" value="muconate_cycloisomerase"/>
    <property type="match status" value="1"/>
</dbReference>
<dbReference type="SFLD" id="SFLDF00009">
    <property type="entry name" value="o-succinylbenzoate_synthase"/>
    <property type="match status" value="1"/>
</dbReference>
<dbReference type="SMART" id="SM00922">
    <property type="entry name" value="MR_MLE"/>
    <property type="match status" value="1"/>
</dbReference>
<dbReference type="SUPFAM" id="SSF51604">
    <property type="entry name" value="Enolase C-terminal domain-like"/>
    <property type="match status" value="1"/>
</dbReference>
<dbReference type="SUPFAM" id="SSF54826">
    <property type="entry name" value="Enolase N-terminal domain-like"/>
    <property type="match status" value="1"/>
</dbReference>
<keyword id="KW-0961">Cell wall biogenesis/degradation</keyword>
<keyword id="KW-0413">Isomerase</keyword>
<keyword id="KW-0460">Magnesium</keyword>
<keyword id="KW-0479">Metal-binding</keyword>
<proteinExistence type="inferred from homology"/>
<name>AEEP_FRATN</name>
<evidence type="ECO:0000250" key="1"/>
<evidence type="ECO:0000269" key="2">
    <source>
    </source>
</evidence>
<evidence type="ECO:0000305" key="3"/>
<comment type="function">
    <text evidence="2">Dipeptide epimerase with a preference for substrates containing a Glu residue in the second position. Catalyzes the epimerization of L-Ala-L-Glu, L-Ser-L-Glu, L-Thr-L-Glu, L-Val-L-Glu, L-Gly-L-Glu and L-Thr-L-Glu (in vitro). May play a role in the metabolism of the murein peptide, of which L-Ala-D-Glu is a component.</text>
</comment>
<comment type="catalytic activity">
    <reaction>
        <text>L-alanyl-L-glutamate = L-alanyl-D-glutamate</text>
        <dbReference type="Rhea" id="RHEA:28394"/>
        <dbReference type="ChEBI" id="CHEBI:61395"/>
        <dbReference type="ChEBI" id="CHEBI:61396"/>
        <dbReference type="EC" id="5.1.1.20"/>
    </reaction>
</comment>
<comment type="cofactor">
    <cofactor evidence="2">
        <name>Mg(2+)</name>
        <dbReference type="ChEBI" id="CHEBI:18420"/>
    </cofactor>
    <text evidence="2">Binds 1 Mg(2+) ion per subunit.</text>
</comment>
<comment type="miscellaneous">
    <text>Part of a large, functionally divergent protein family. Protein modeling and substrate docking were used to predict the substrate specificity, prior to biochemical analysis.</text>
</comment>
<comment type="similarity">
    <text evidence="3">Belongs to the mandelate racemase/muconate lactonizing enzyme family.</text>
</comment>
<protein>
    <recommendedName>
        <fullName>L-Ala-D/L-Glu epimerase</fullName>
        <shortName>AE epimerase</shortName>
        <shortName>AEE</shortName>
        <ecNumber>5.1.1.20</ecNumber>
    </recommendedName>
    <alternativeName>
        <fullName>L-Hydrophobic/Polar-D/L-Glu epimerase</fullName>
    </alternativeName>
</protein>
<gene>
    <name type="ordered locus">FTN_0700</name>
</gene>
<sequence>MSKIIDIKTSIVTIPLKRTFVTAVRSTNHIDAVVVELSLDNGNKGYGVAPATTAITGDTLQGMQYIISEIFAPVILSSNLSDYKQTLELAFKKVMFNSAAKMALDLAFHDLLAKQKNISVAKLLGAKNNIIETDVSISCGSVAETIQNIQNGVEANFTTIKVKTGADFNRDIQLLKSLDNEFSKNIKFRFDANQGWNISQTKQFIEELNKYSLNVEIIEQPVKYYDISAMREITKFSNIPIVADESVFDAKDAERVIDEQACNMINIKLAKSGGILEAQKIKKLADSVGIPCMVGCMMESPAGILATASFALAEGITVADLDPLDWVAKDLYSDYITFNEPNIIIKDNLKGFGFSF</sequence>
<organism>
    <name type="scientific">Francisella tularensis subsp. novicida (strain U112)</name>
    <dbReference type="NCBI Taxonomy" id="401614"/>
    <lineage>
        <taxon>Bacteria</taxon>
        <taxon>Pseudomonadati</taxon>
        <taxon>Pseudomonadota</taxon>
        <taxon>Gammaproteobacteria</taxon>
        <taxon>Thiotrichales</taxon>
        <taxon>Francisellaceae</taxon>
        <taxon>Francisella</taxon>
    </lineage>
</organism>
<reference key="1">
    <citation type="journal article" date="2007" name="Genome Biol.">
        <title>Comparison of Francisella tularensis genomes reveals evolutionary events associated with the emergence of human pathogenic strains.</title>
        <authorList>
            <person name="Rohmer L."/>
            <person name="Fong C."/>
            <person name="Abmayr S."/>
            <person name="Wasnick M."/>
            <person name="Larson Freeman T.J."/>
            <person name="Radey M."/>
            <person name="Guina T."/>
            <person name="Svensson K."/>
            <person name="Hayden H.S."/>
            <person name="Jacobs M."/>
            <person name="Gallagher L.A."/>
            <person name="Manoil C."/>
            <person name="Ernst R.K."/>
            <person name="Drees B."/>
            <person name="Buckley D."/>
            <person name="Haugen E."/>
            <person name="Bovee D."/>
            <person name="Zhou Y."/>
            <person name="Chang J."/>
            <person name="Levy R."/>
            <person name="Lim R."/>
            <person name="Gillett W."/>
            <person name="Guenthener D."/>
            <person name="Kang A."/>
            <person name="Shaffer S.A."/>
            <person name="Taylor G."/>
            <person name="Chen J."/>
            <person name="Gallis B."/>
            <person name="D'Argenio D.A."/>
            <person name="Forsman M."/>
            <person name="Olson M.V."/>
            <person name="Goodlett D.R."/>
            <person name="Kaul R."/>
            <person name="Miller S.I."/>
            <person name="Brittnacher M.J."/>
        </authorList>
    </citation>
    <scope>NUCLEOTIDE SEQUENCE [LARGE SCALE GENOMIC DNA]</scope>
    <source>
        <strain>U112</strain>
    </source>
</reference>
<reference key="2">
    <citation type="journal article" date="2012" name="Proc. Natl. Acad. Sci. U.S.A.">
        <title>Homology models guide discovery of diverse enzyme specificities among dipeptide epimerases in the enolase superfamily.</title>
        <authorList>
            <person name="Lukk T."/>
            <person name="Sakai A."/>
            <person name="Kalyanaraman C."/>
            <person name="Brown S.D."/>
            <person name="Imker H.J."/>
            <person name="Song L."/>
            <person name="Fedorov A.A."/>
            <person name="Fedorov E.V."/>
            <person name="Toro R."/>
            <person name="Hillerich B."/>
            <person name="Seidel R."/>
            <person name="Patskovsky Y."/>
            <person name="Vetting M.W."/>
            <person name="Nair S.K."/>
            <person name="Babbitt P.C."/>
            <person name="Almo S.C."/>
            <person name="Gerlt J.A."/>
            <person name="Jacobson M.P."/>
        </authorList>
    </citation>
    <scope>FUNCTION</scope>
    <scope>COFACTOR</scope>
</reference>